<protein>
    <recommendedName>
        <fullName evidence="1">Large ribosomal subunit protein uL3</fullName>
    </recommendedName>
    <alternativeName>
        <fullName evidence="3">50S ribosomal protein L3</fullName>
    </alternativeName>
</protein>
<name>RL3_STAA3</name>
<organism>
    <name type="scientific">Staphylococcus aureus (strain USA300)</name>
    <dbReference type="NCBI Taxonomy" id="367830"/>
    <lineage>
        <taxon>Bacteria</taxon>
        <taxon>Bacillati</taxon>
        <taxon>Bacillota</taxon>
        <taxon>Bacilli</taxon>
        <taxon>Bacillales</taxon>
        <taxon>Staphylococcaceae</taxon>
        <taxon>Staphylococcus</taxon>
    </lineage>
</organism>
<proteinExistence type="inferred from homology"/>
<sequence>MTKGILGRKIGMTQVFGENGELIPVTVVEAKENVVLQKKTVEVDGYNAIQVGFEDKKAYKKDAKSNKYANKPAEGHAKKADAAPKRFIREFRNVDVDAYEVGQEVSVDTFVAGDVIDVTGVSKGKGFQGAIKRHGQSRGPMSHGSHFHRAPGSVGMASDASRVFKGQKMPGRMGGNTVTVQNLEVVQVDTENKVILVKGNVPGPKKGLVEIRTSIKKGNK</sequence>
<feature type="chain" id="PRO_0000241415" description="Large ribosomal subunit protein uL3">
    <location>
        <begin position="1"/>
        <end position="220"/>
    </location>
</feature>
<feature type="region of interest" description="Disordered" evidence="2">
    <location>
        <begin position="130"/>
        <end position="156"/>
    </location>
</feature>
<dbReference type="EMBL" id="CP000255">
    <property type="protein sequence ID" value="ABD22476.1"/>
    <property type="molecule type" value="Genomic_DNA"/>
</dbReference>
<dbReference type="RefSeq" id="WP_000160212.1">
    <property type="nucleotide sequence ID" value="NZ_CP027476.1"/>
</dbReference>
<dbReference type="SMR" id="Q2FEN9"/>
<dbReference type="GeneID" id="98346562"/>
<dbReference type="KEGG" id="saa:SAUSA300_2204"/>
<dbReference type="HOGENOM" id="CLU_044142_4_1_9"/>
<dbReference type="Proteomes" id="UP000001939">
    <property type="component" value="Chromosome"/>
</dbReference>
<dbReference type="GO" id="GO:0022625">
    <property type="term" value="C:cytosolic large ribosomal subunit"/>
    <property type="evidence" value="ECO:0007669"/>
    <property type="project" value="TreeGrafter"/>
</dbReference>
<dbReference type="GO" id="GO:0019843">
    <property type="term" value="F:rRNA binding"/>
    <property type="evidence" value="ECO:0007669"/>
    <property type="project" value="UniProtKB-UniRule"/>
</dbReference>
<dbReference type="GO" id="GO:0003735">
    <property type="term" value="F:structural constituent of ribosome"/>
    <property type="evidence" value="ECO:0007669"/>
    <property type="project" value="InterPro"/>
</dbReference>
<dbReference type="GO" id="GO:0006412">
    <property type="term" value="P:translation"/>
    <property type="evidence" value="ECO:0007669"/>
    <property type="project" value="UniProtKB-UniRule"/>
</dbReference>
<dbReference type="FunFam" id="2.40.30.10:FF:000004">
    <property type="entry name" value="50S ribosomal protein L3"/>
    <property type="match status" value="1"/>
</dbReference>
<dbReference type="FunFam" id="3.30.160.810:FF:000002">
    <property type="entry name" value="50S ribosomal protein L3"/>
    <property type="match status" value="1"/>
</dbReference>
<dbReference type="Gene3D" id="3.30.160.810">
    <property type="match status" value="1"/>
</dbReference>
<dbReference type="Gene3D" id="2.40.30.10">
    <property type="entry name" value="Translation factors"/>
    <property type="match status" value="1"/>
</dbReference>
<dbReference type="HAMAP" id="MF_01325_B">
    <property type="entry name" value="Ribosomal_uL3_B"/>
    <property type="match status" value="1"/>
</dbReference>
<dbReference type="InterPro" id="IPR000597">
    <property type="entry name" value="Ribosomal_uL3"/>
</dbReference>
<dbReference type="InterPro" id="IPR019927">
    <property type="entry name" value="Ribosomal_uL3_bac/org-type"/>
</dbReference>
<dbReference type="InterPro" id="IPR019926">
    <property type="entry name" value="Ribosomal_uL3_CS"/>
</dbReference>
<dbReference type="InterPro" id="IPR009000">
    <property type="entry name" value="Transl_B-barrel_sf"/>
</dbReference>
<dbReference type="NCBIfam" id="TIGR03625">
    <property type="entry name" value="L3_bact"/>
    <property type="match status" value="1"/>
</dbReference>
<dbReference type="PANTHER" id="PTHR11229">
    <property type="entry name" value="50S RIBOSOMAL PROTEIN L3"/>
    <property type="match status" value="1"/>
</dbReference>
<dbReference type="PANTHER" id="PTHR11229:SF16">
    <property type="entry name" value="LARGE RIBOSOMAL SUBUNIT PROTEIN UL3C"/>
    <property type="match status" value="1"/>
</dbReference>
<dbReference type="Pfam" id="PF00297">
    <property type="entry name" value="Ribosomal_L3"/>
    <property type="match status" value="1"/>
</dbReference>
<dbReference type="SUPFAM" id="SSF50447">
    <property type="entry name" value="Translation proteins"/>
    <property type="match status" value="1"/>
</dbReference>
<dbReference type="PROSITE" id="PS00474">
    <property type="entry name" value="RIBOSOMAL_L3"/>
    <property type="match status" value="1"/>
</dbReference>
<evidence type="ECO:0000255" key="1">
    <source>
        <dbReference type="HAMAP-Rule" id="MF_01325"/>
    </source>
</evidence>
<evidence type="ECO:0000256" key="2">
    <source>
        <dbReference type="SAM" id="MobiDB-lite"/>
    </source>
</evidence>
<evidence type="ECO:0000305" key="3"/>
<reference key="1">
    <citation type="journal article" date="2006" name="Lancet">
        <title>Complete genome sequence of USA300, an epidemic clone of community-acquired meticillin-resistant Staphylococcus aureus.</title>
        <authorList>
            <person name="Diep B.A."/>
            <person name="Gill S.R."/>
            <person name="Chang R.F."/>
            <person name="Phan T.H."/>
            <person name="Chen J.H."/>
            <person name="Davidson M.G."/>
            <person name="Lin F."/>
            <person name="Lin J."/>
            <person name="Carleton H.A."/>
            <person name="Mongodin E.F."/>
            <person name="Sensabaugh G.F."/>
            <person name="Perdreau-Remington F."/>
        </authorList>
    </citation>
    <scope>NUCLEOTIDE SEQUENCE [LARGE SCALE GENOMIC DNA]</scope>
    <source>
        <strain>USA300</strain>
    </source>
</reference>
<accession>Q2FEN9</accession>
<comment type="function">
    <text evidence="1">One of the primary rRNA binding proteins, it binds directly near the 3'-end of the 23S rRNA, where it nucleates assembly of the 50S subunit.</text>
</comment>
<comment type="subunit">
    <text evidence="1">Part of the 50S ribosomal subunit. Forms a cluster with proteins L14 and L19.</text>
</comment>
<comment type="similarity">
    <text evidence="1">Belongs to the universal ribosomal protein uL3 family.</text>
</comment>
<gene>
    <name evidence="1" type="primary">rplC</name>
    <name type="ordered locus">SAUSA300_2204</name>
</gene>
<keyword id="KW-0687">Ribonucleoprotein</keyword>
<keyword id="KW-0689">Ribosomal protein</keyword>
<keyword id="KW-0694">RNA-binding</keyword>
<keyword id="KW-0699">rRNA-binding</keyword>